<protein>
    <recommendedName>
        <fullName>Orotidine 5'-phosphate decarboxylase</fullName>
        <ecNumber>4.1.1.23</ecNumber>
    </recommendedName>
    <alternativeName>
        <fullName>OMP decarboxylase</fullName>
        <shortName>OMPDCase</shortName>
        <shortName>OMPdecase</shortName>
    </alternativeName>
    <alternativeName>
        <fullName>Uridine 5'-monophosphate synthase</fullName>
        <shortName>UMP synthase</shortName>
    </alternativeName>
</protein>
<accession>Q1E9A1</accession>
<accession>J3KI15</accession>
<accession>Q9C0T0</accession>
<accession>Q9C144</accession>
<accession>Q9C145</accession>
<sequence>MASKSQVPYEDRARDHPNPLARRLFQIATEKQSNVAVSADVTTTKELLDLADRLGPYMVVLKTHIDILADFSAETITGLQSLSQKHNFLIFEDRKFVDIGNTVQKQYHGGALHISEWAHIVNATVLPGPGIIDALAQVASAPDFPHASDRGLLILATMTSKGSLATGQYTELSVELARKYKGFVLGFVASRSLEGVETAGKADDEDFVLFTTGVNLASKGDALGQQYQTPESAIGGGADFIISGRGIYAAPDPVDAARRYQKAGWDAYLKRVGR</sequence>
<organism>
    <name type="scientific">Coccidioides immitis (strain RS)</name>
    <name type="common">Valley fever fungus</name>
    <dbReference type="NCBI Taxonomy" id="246410"/>
    <lineage>
        <taxon>Eukaryota</taxon>
        <taxon>Fungi</taxon>
        <taxon>Dikarya</taxon>
        <taxon>Ascomycota</taxon>
        <taxon>Pezizomycotina</taxon>
        <taxon>Eurotiomycetes</taxon>
        <taxon>Eurotiomycetidae</taxon>
        <taxon>Onygenales</taxon>
        <taxon>Onygenaceae</taxon>
        <taxon>Coccidioides</taxon>
    </lineage>
</organism>
<evidence type="ECO:0000250" key="1"/>
<evidence type="ECO:0000255" key="2">
    <source>
        <dbReference type="PROSITE-ProRule" id="PRU10110"/>
    </source>
</evidence>
<evidence type="ECO:0000269" key="3">
    <source>
    </source>
</evidence>
<evidence type="ECO:0000305" key="4"/>
<comment type="catalytic activity">
    <reaction evidence="2">
        <text>orotidine 5'-phosphate + H(+) = UMP + CO2</text>
        <dbReference type="Rhea" id="RHEA:11596"/>
        <dbReference type="ChEBI" id="CHEBI:15378"/>
        <dbReference type="ChEBI" id="CHEBI:16526"/>
        <dbReference type="ChEBI" id="CHEBI:57538"/>
        <dbReference type="ChEBI" id="CHEBI:57865"/>
        <dbReference type="EC" id="4.1.1.23"/>
    </reaction>
</comment>
<comment type="pathway">
    <text>Pyrimidine metabolism; UMP biosynthesis via de novo pathway; UMP from orotate: step 2/2.</text>
</comment>
<comment type="similarity">
    <text evidence="4">Belongs to the OMP decarboxylase family.</text>
</comment>
<feature type="chain" id="PRO_0000252292" description="Orotidine 5'-phosphate decarboxylase">
    <location>
        <begin position="1"/>
        <end position="274"/>
    </location>
</feature>
<feature type="active site" description="Proton donor" evidence="2">
    <location>
        <position position="95"/>
    </location>
</feature>
<feature type="binding site" evidence="1">
    <location>
        <position position="40"/>
    </location>
    <ligand>
        <name>substrate</name>
    </ligand>
</feature>
<feature type="binding site" evidence="1">
    <location>
        <begin position="62"/>
        <end position="64"/>
    </location>
    <ligand>
        <name>substrate</name>
    </ligand>
</feature>
<feature type="binding site" evidence="1">
    <location>
        <begin position="93"/>
        <end position="102"/>
    </location>
    <ligand>
        <name>substrate</name>
    </ligand>
</feature>
<feature type="binding site" evidence="1">
    <location>
        <position position="227"/>
    </location>
    <ligand>
        <name>substrate</name>
    </ligand>
</feature>
<feature type="binding site" evidence="1">
    <location>
        <position position="245"/>
    </location>
    <ligand>
        <name>substrate</name>
    </ligand>
</feature>
<feature type="sequence variant" description="In strain: RMSCC 1695 / CA3." evidence="3">
    <original>T</original>
    <variation>S</variation>
    <location>
        <position position="75"/>
    </location>
</feature>
<feature type="sequence variant" description="In strain: RMSCC 1695 / CA3 and RMSCC 2267 /CA1." evidence="3">
    <original>I</original>
    <variation>V</variation>
    <location>
        <position position="76"/>
    </location>
</feature>
<name>PYRF_COCIM</name>
<dbReference type="EC" id="4.1.1.23"/>
<dbReference type="EMBL" id="GG704911">
    <property type="protein sequence ID" value="EAS35508.1"/>
    <property type="molecule type" value="Genomic_DNA"/>
</dbReference>
<dbReference type="EMBL" id="AJ292103">
    <property type="protein sequence ID" value="CAC35047.1"/>
    <property type="molecule type" value="Genomic_DNA"/>
</dbReference>
<dbReference type="EMBL" id="AJ292104">
    <property type="protein sequence ID" value="CAC35048.1"/>
    <property type="molecule type" value="Genomic_DNA"/>
</dbReference>
<dbReference type="EMBL" id="AJ292105">
    <property type="protein sequence ID" value="CAC35049.1"/>
    <property type="molecule type" value="Genomic_DNA"/>
</dbReference>
<dbReference type="RefSeq" id="XP_001247091.1">
    <property type="nucleotide sequence ID" value="XM_001247090.2"/>
</dbReference>
<dbReference type="SMR" id="Q1E9A1"/>
<dbReference type="FunCoup" id="Q1E9A1">
    <property type="interactions" value="1069"/>
</dbReference>
<dbReference type="STRING" id="246410.Q1E9A1"/>
<dbReference type="GeneID" id="4567662"/>
<dbReference type="KEGG" id="cim:CIMG_00862"/>
<dbReference type="VEuPathDB" id="FungiDB:CIMG_00862"/>
<dbReference type="InParanoid" id="Q1E9A1"/>
<dbReference type="OMA" id="CLIKTHI"/>
<dbReference type="OrthoDB" id="10263753at2759"/>
<dbReference type="UniPathway" id="UPA00070">
    <property type="reaction ID" value="UER00120"/>
</dbReference>
<dbReference type="Proteomes" id="UP000001261">
    <property type="component" value="Unassembled WGS sequence"/>
</dbReference>
<dbReference type="GO" id="GO:0005829">
    <property type="term" value="C:cytosol"/>
    <property type="evidence" value="ECO:0007669"/>
    <property type="project" value="TreeGrafter"/>
</dbReference>
<dbReference type="GO" id="GO:0004590">
    <property type="term" value="F:orotidine-5'-phosphate decarboxylase activity"/>
    <property type="evidence" value="ECO:0007669"/>
    <property type="project" value="UniProtKB-EC"/>
</dbReference>
<dbReference type="GO" id="GO:0006207">
    <property type="term" value="P:'de novo' pyrimidine nucleobase biosynthetic process"/>
    <property type="evidence" value="ECO:0007669"/>
    <property type="project" value="InterPro"/>
</dbReference>
<dbReference type="GO" id="GO:0044205">
    <property type="term" value="P:'de novo' UMP biosynthetic process"/>
    <property type="evidence" value="ECO:0007669"/>
    <property type="project" value="UniProtKB-UniPathway"/>
</dbReference>
<dbReference type="CDD" id="cd04725">
    <property type="entry name" value="OMP_decarboxylase_like"/>
    <property type="match status" value="1"/>
</dbReference>
<dbReference type="FunFam" id="3.20.20.70:FF:000114">
    <property type="entry name" value="Decarboxylase,orotidine phosphate"/>
    <property type="match status" value="1"/>
</dbReference>
<dbReference type="Gene3D" id="3.20.20.70">
    <property type="entry name" value="Aldolase class I"/>
    <property type="match status" value="1"/>
</dbReference>
<dbReference type="InterPro" id="IPR013785">
    <property type="entry name" value="Aldolase_TIM"/>
</dbReference>
<dbReference type="InterPro" id="IPR014732">
    <property type="entry name" value="OMPdecase"/>
</dbReference>
<dbReference type="InterPro" id="IPR018089">
    <property type="entry name" value="OMPdecase_AS"/>
</dbReference>
<dbReference type="InterPro" id="IPR001754">
    <property type="entry name" value="OMPdeCOase_dom"/>
</dbReference>
<dbReference type="InterPro" id="IPR011060">
    <property type="entry name" value="RibuloseP-bd_barrel"/>
</dbReference>
<dbReference type="NCBIfam" id="TIGR01740">
    <property type="entry name" value="pyrF"/>
    <property type="match status" value="1"/>
</dbReference>
<dbReference type="PANTHER" id="PTHR32119">
    <property type="entry name" value="OROTIDINE 5'-PHOSPHATE DECARBOXYLASE"/>
    <property type="match status" value="1"/>
</dbReference>
<dbReference type="PANTHER" id="PTHR32119:SF2">
    <property type="entry name" value="OROTIDINE 5'-PHOSPHATE DECARBOXYLASE"/>
    <property type="match status" value="1"/>
</dbReference>
<dbReference type="Pfam" id="PF00215">
    <property type="entry name" value="OMPdecase"/>
    <property type="match status" value="1"/>
</dbReference>
<dbReference type="SMART" id="SM00934">
    <property type="entry name" value="OMPdecase"/>
    <property type="match status" value="1"/>
</dbReference>
<dbReference type="SUPFAM" id="SSF51366">
    <property type="entry name" value="Ribulose-phoshate binding barrel"/>
    <property type="match status" value="1"/>
</dbReference>
<dbReference type="PROSITE" id="PS00156">
    <property type="entry name" value="OMPDECASE"/>
    <property type="match status" value="1"/>
</dbReference>
<proteinExistence type="inferred from homology"/>
<gene>
    <name type="primary">URA3</name>
    <name type="ORF">CIMG_00862</name>
</gene>
<reference key="1">
    <citation type="journal article" date="2009" name="Genome Res.">
        <title>Comparative genomic analyses of the human fungal pathogens Coccidioides and their relatives.</title>
        <authorList>
            <person name="Sharpton T.J."/>
            <person name="Stajich J.E."/>
            <person name="Rounsley S.D."/>
            <person name="Gardner M.J."/>
            <person name="Wortman J.R."/>
            <person name="Jordar V.S."/>
            <person name="Maiti R."/>
            <person name="Kodira C.D."/>
            <person name="Neafsey D.E."/>
            <person name="Zeng Q."/>
            <person name="Hung C.-Y."/>
            <person name="McMahan C."/>
            <person name="Muszewska A."/>
            <person name="Grynberg M."/>
            <person name="Mandel M.A."/>
            <person name="Kellner E.M."/>
            <person name="Barker B.M."/>
            <person name="Galgiani J.N."/>
            <person name="Orbach M.J."/>
            <person name="Kirkland T.N."/>
            <person name="Cole G.T."/>
            <person name="Henn M.R."/>
            <person name="Birren B.W."/>
            <person name="Taylor J.W."/>
        </authorList>
    </citation>
    <scope>NUCLEOTIDE SEQUENCE [LARGE SCALE GENOMIC DNA]</scope>
    <source>
        <strain>RS</strain>
    </source>
</reference>
<reference key="2">
    <citation type="journal article" date="2010" name="Genome Res.">
        <title>Population genomic sequencing of Coccidioides fungi reveals recent hybridization and transposon control.</title>
        <authorList>
            <person name="Neafsey D.E."/>
            <person name="Barker B.M."/>
            <person name="Sharpton T.J."/>
            <person name="Stajich J.E."/>
            <person name="Park D.J."/>
            <person name="Whiston E."/>
            <person name="Hung C.-Y."/>
            <person name="McMahan C."/>
            <person name="White J."/>
            <person name="Sykes S."/>
            <person name="Heiman D."/>
            <person name="Young S."/>
            <person name="Zeng Q."/>
            <person name="Abouelleil A."/>
            <person name="Aftuck L."/>
            <person name="Bessette D."/>
            <person name="Brown A."/>
            <person name="FitzGerald M."/>
            <person name="Lui A."/>
            <person name="Macdonald J.P."/>
            <person name="Priest M."/>
            <person name="Orbach M.J."/>
            <person name="Galgiani J.N."/>
            <person name="Kirkland T.N."/>
            <person name="Cole G.T."/>
            <person name="Birren B.W."/>
            <person name="Henn M.R."/>
            <person name="Taylor J.W."/>
            <person name="Rounsley S.D."/>
        </authorList>
    </citation>
    <scope>GENOME REANNOTATION</scope>
    <source>
        <strain>RS</strain>
    </source>
</reference>
<reference key="3">
    <citation type="journal article" date="1997" name="Proc. Natl. Acad. Sci. U.S.A.">
        <title>Concordance of gene genealogies reveals reproductive isolation in the pathogenic fungus Coccidioides immitis.</title>
        <authorList>
            <person name="Koufopanou V."/>
            <person name="Burt A."/>
            <person name="Taylor J.W."/>
        </authorList>
    </citation>
    <scope>NUCLEOTIDE SEQUENCE [GENOMIC DNA] OF 70-201</scope>
    <scope>VARIANTS SER-75 AND VAL-76</scope>
    <source>
        <strain>RMSCC 1695 / CA3</strain>
        <strain>RMSCC 2019 / CA4</strain>
        <strain>RMSCC 2267 / CA1</strain>
    </source>
</reference>
<reference key="4">
    <citation type="journal article" date="1998" name="Proc. Natl. Acad. Sci. U.S.A.">
        <authorList>
            <person name="Koufopanou V."/>
            <person name="Burt A."/>
            <person name="Taylor J.W."/>
        </authorList>
    </citation>
    <scope>ERRATUM OF PUBMED:9144263</scope>
</reference>
<keyword id="KW-0210">Decarboxylase</keyword>
<keyword id="KW-0456">Lyase</keyword>
<keyword id="KW-0665">Pyrimidine biosynthesis</keyword>
<keyword id="KW-1185">Reference proteome</keyword>